<organism>
    <name type="scientific">Shigella boydii serotype 18 (strain CDC 3083-94 / BS512)</name>
    <dbReference type="NCBI Taxonomy" id="344609"/>
    <lineage>
        <taxon>Bacteria</taxon>
        <taxon>Pseudomonadati</taxon>
        <taxon>Pseudomonadota</taxon>
        <taxon>Gammaproteobacteria</taxon>
        <taxon>Enterobacterales</taxon>
        <taxon>Enterobacteriaceae</taxon>
        <taxon>Shigella</taxon>
    </lineage>
</organism>
<dbReference type="EMBL" id="CP001063">
    <property type="protein sequence ID" value="ACD07988.1"/>
    <property type="molecule type" value="Genomic_DNA"/>
</dbReference>
<dbReference type="RefSeq" id="WP_001160737.1">
    <property type="nucleotide sequence ID" value="NC_010658.1"/>
</dbReference>
<dbReference type="SMR" id="B2TUL3"/>
<dbReference type="STRING" id="344609.SbBS512_E2465"/>
<dbReference type="KEGG" id="sbc:SbBS512_E2465"/>
<dbReference type="HOGENOM" id="CLU_117144_3_0_6"/>
<dbReference type="Proteomes" id="UP000001030">
    <property type="component" value="Chromosome"/>
</dbReference>
<dbReference type="Gene3D" id="3.30.110.70">
    <property type="entry name" value="Hypothetical protein apc22750. Chain B"/>
    <property type="match status" value="1"/>
</dbReference>
<dbReference type="HAMAP" id="MF_00338">
    <property type="entry name" value="UPF0145"/>
    <property type="match status" value="1"/>
</dbReference>
<dbReference type="InterPro" id="IPR035439">
    <property type="entry name" value="UPF0145_dom_sf"/>
</dbReference>
<dbReference type="InterPro" id="IPR002765">
    <property type="entry name" value="UPF0145_YbjQ-like"/>
</dbReference>
<dbReference type="NCBIfam" id="NF002776">
    <property type="entry name" value="PRK02877.1"/>
    <property type="match status" value="1"/>
</dbReference>
<dbReference type="PANTHER" id="PTHR34068">
    <property type="entry name" value="UPF0145 PROTEIN YBJQ"/>
    <property type="match status" value="1"/>
</dbReference>
<dbReference type="PANTHER" id="PTHR34068:SF1">
    <property type="entry name" value="UPF0145 PROTEIN YBJQ"/>
    <property type="match status" value="1"/>
</dbReference>
<dbReference type="Pfam" id="PF01906">
    <property type="entry name" value="YbjQ_1"/>
    <property type="match status" value="1"/>
</dbReference>
<dbReference type="SUPFAM" id="SSF117782">
    <property type="entry name" value="YbjQ-like"/>
    <property type="match status" value="1"/>
</dbReference>
<proteinExistence type="inferred from homology"/>
<reference key="1">
    <citation type="submission" date="2008-05" db="EMBL/GenBank/DDBJ databases">
        <title>Complete sequence of Shigella boydii serotype 18 strain BS512.</title>
        <authorList>
            <person name="Rasko D.A."/>
            <person name="Rosovitz M."/>
            <person name="Maurelli A.T."/>
            <person name="Myers G."/>
            <person name="Seshadri R."/>
            <person name="Cer R."/>
            <person name="Jiang L."/>
            <person name="Ravel J."/>
            <person name="Sebastian Y."/>
        </authorList>
    </citation>
    <scope>NUCLEOTIDE SEQUENCE [LARGE SCALE GENOMIC DNA]</scope>
    <source>
        <strain>CDC 3083-94 / BS512</strain>
    </source>
</reference>
<protein>
    <recommendedName>
        <fullName evidence="1">UPF0145 protein YbjQ</fullName>
    </recommendedName>
</protein>
<comment type="similarity">
    <text evidence="1">Belongs to the UPF0145 family.</text>
</comment>
<evidence type="ECO:0000255" key="1">
    <source>
        <dbReference type="HAMAP-Rule" id="MF_00338"/>
    </source>
</evidence>
<accession>B2TUL3</accession>
<gene>
    <name evidence="1" type="primary">ybjQ</name>
    <name type="ordered locus">SbBS512_E2465</name>
</gene>
<sequence>MQFSTTPTLEGQTIVEYCGVVTGEAILGANIFRDFFAGIRDIVGGRSGAYEKELRKAREIAFEELGSQARALGADAVVGIDIDYETVGQNGSMLMVSVSGTAVKTRR</sequence>
<keyword id="KW-1185">Reference proteome</keyword>
<name>YBJQ_SHIB3</name>
<feature type="chain" id="PRO_1000120017" description="UPF0145 protein YbjQ">
    <location>
        <begin position="1"/>
        <end position="107"/>
    </location>
</feature>